<accession>O64638</accession>
<accession>Q8GXM0</accession>
<proteinExistence type="evidence at transcript level"/>
<dbReference type="EC" id="1.14.-.-"/>
<dbReference type="EMBL" id="AC003680">
    <property type="protein sequence ID" value="AAC06159.1"/>
    <property type="status" value="ALT_INIT"/>
    <property type="molecule type" value="Genomic_DNA"/>
</dbReference>
<dbReference type="EMBL" id="CP002685">
    <property type="protein sequence ID" value="AEC10573.1"/>
    <property type="molecule type" value="Genomic_DNA"/>
</dbReference>
<dbReference type="EMBL" id="AK118163">
    <property type="protein sequence ID" value="BAC42787.1"/>
    <property type="molecule type" value="mRNA"/>
</dbReference>
<dbReference type="PIR" id="T00871">
    <property type="entry name" value="T00871"/>
</dbReference>
<dbReference type="RefSeq" id="NP_182082.2">
    <property type="nucleotide sequence ID" value="NM_130120.4"/>
</dbReference>
<dbReference type="SMR" id="O64638"/>
<dbReference type="BioGRID" id="4502">
    <property type="interactions" value="1"/>
</dbReference>
<dbReference type="FunCoup" id="O64638">
    <property type="interactions" value="436"/>
</dbReference>
<dbReference type="IntAct" id="O64638">
    <property type="interactions" value="1"/>
</dbReference>
<dbReference type="STRING" id="3702.O64638"/>
<dbReference type="PaxDb" id="3702-AT2G45580.1"/>
<dbReference type="ProteomicsDB" id="240262"/>
<dbReference type="EnsemblPlants" id="AT2G45580.1">
    <property type="protein sequence ID" value="AT2G45580.1"/>
    <property type="gene ID" value="AT2G45580"/>
</dbReference>
<dbReference type="GeneID" id="819166"/>
<dbReference type="Gramene" id="AT2G45580.1">
    <property type="protein sequence ID" value="AT2G45580.1"/>
    <property type="gene ID" value="AT2G45580"/>
</dbReference>
<dbReference type="KEGG" id="ath:AT2G45580"/>
<dbReference type="Araport" id="AT2G45580"/>
<dbReference type="TAIR" id="AT2G45580">
    <property type="gene designation" value="CYP76C3"/>
</dbReference>
<dbReference type="eggNOG" id="KOG0156">
    <property type="taxonomic scope" value="Eukaryota"/>
</dbReference>
<dbReference type="HOGENOM" id="CLU_001570_4_2_1"/>
<dbReference type="InParanoid" id="O64638"/>
<dbReference type="OMA" id="AHLHIMM"/>
<dbReference type="PhylomeDB" id="O64638"/>
<dbReference type="BioCyc" id="ARA:AT2G45580-MONOMER"/>
<dbReference type="PRO" id="PR:O64638"/>
<dbReference type="Proteomes" id="UP000006548">
    <property type="component" value="Chromosome 2"/>
</dbReference>
<dbReference type="ExpressionAtlas" id="O64638">
    <property type="expression patterns" value="baseline and differential"/>
</dbReference>
<dbReference type="GO" id="GO:0016020">
    <property type="term" value="C:membrane"/>
    <property type="evidence" value="ECO:0007669"/>
    <property type="project" value="UniProtKB-SubCell"/>
</dbReference>
<dbReference type="GO" id="GO:0020037">
    <property type="term" value="F:heme binding"/>
    <property type="evidence" value="ECO:0007669"/>
    <property type="project" value="InterPro"/>
</dbReference>
<dbReference type="GO" id="GO:0005506">
    <property type="term" value="F:iron ion binding"/>
    <property type="evidence" value="ECO:0007669"/>
    <property type="project" value="InterPro"/>
</dbReference>
<dbReference type="GO" id="GO:0004497">
    <property type="term" value="F:monooxygenase activity"/>
    <property type="evidence" value="ECO:0007669"/>
    <property type="project" value="UniProtKB-KW"/>
</dbReference>
<dbReference type="GO" id="GO:0016705">
    <property type="term" value="F:oxidoreductase activity, acting on paired donors, with incorporation or reduction of molecular oxygen"/>
    <property type="evidence" value="ECO:0007669"/>
    <property type="project" value="InterPro"/>
</dbReference>
<dbReference type="CDD" id="cd11073">
    <property type="entry name" value="CYP76-like"/>
    <property type="match status" value="1"/>
</dbReference>
<dbReference type="FunFam" id="1.10.630.10:FF:000007">
    <property type="entry name" value="Cytochrome P450 76C4"/>
    <property type="match status" value="1"/>
</dbReference>
<dbReference type="Gene3D" id="1.10.630.10">
    <property type="entry name" value="Cytochrome P450"/>
    <property type="match status" value="1"/>
</dbReference>
<dbReference type="InterPro" id="IPR001128">
    <property type="entry name" value="Cyt_P450"/>
</dbReference>
<dbReference type="InterPro" id="IPR017972">
    <property type="entry name" value="Cyt_P450_CS"/>
</dbReference>
<dbReference type="InterPro" id="IPR002401">
    <property type="entry name" value="Cyt_P450_E_grp-I"/>
</dbReference>
<dbReference type="InterPro" id="IPR036396">
    <property type="entry name" value="Cyt_P450_sf"/>
</dbReference>
<dbReference type="PANTHER" id="PTHR47950">
    <property type="entry name" value="CYTOCHROME P450, FAMILY 76, SUBFAMILY C, POLYPEPTIDE 5-RELATED"/>
    <property type="match status" value="1"/>
</dbReference>
<dbReference type="PANTHER" id="PTHR47950:SF44">
    <property type="entry name" value="CYTOCHROME P450, FAMILY 76, SUBFAMILY C, POLYPEPTIDE 5-RELATED"/>
    <property type="match status" value="1"/>
</dbReference>
<dbReference type="Pfam" id="PF00067">
    <property type="entry name" value="p450"/>
    <property type="match status" value="1"/>
</dbReference>
<dbReference type="PRINTS" id="PR00463">
    <property type="entry name" value="EP450I"/>
</dbReference>
<dbReference type="PRINTS" id="PR00385">
    <property type="entry name" value="P450"/>
</dbReference>
<dbReference type="SUPFAM" id="SSF48264">
    <property type="entry name" value="Cytochrome P450"/>
    <property type="match status" value="1"/>
</dbReference>
<dbReference type="PROSITE" id="PS00086">
    <property type="entry name" value="CYTOCHROME_P450"/>
    <property type="match status" value="1"/>
</dbReference>
<reference key="1">
    <citation type="journal article" date="1999" name="Nature">
        <title>Sequence and analysis of chromosome 2 of the plant Arabidopsis thaliana.</title>
        <authorList>
            <person name="Lin X."/>
            <person name="Kaul S."/>
            <person name="Rounsley S.D."/>
            <person name="Shea T.P."/>
            <person name="Benito M.-I."/>
            <person name="Town C.D."/>
            <person name="Fujii C.Y."/>
            <person name="Mason T.M."/>
            <person name="Bowman C.L."/>
            <person name="Barnstead M.E."/>
            <person name="Feldblyum T.V."/>
            <person name="Buell C.R."/>
            <person name="Ketchum K.A."/>
            <person name="Lee J.J."/>
            <person name="Ronning C.M."/>
            <person name="Koo H.L."/>
            <person name="Moffat K.S."/>
            <person name="Cronin L.A."/>
            <person name="Shen M."/>
            <person name="Pai G."/>
            <person name="Van Aken S."/>
            <person name="Umayam L."/>
            <person name="Tallon L.J."/>
            <person name="Gill J.E."/>
            <person name="Adams M.D."/>
            <person name="Carrera A.J."/>
            <person name="Creasy T.H."/>
            <person name="Goodman H.M."/>
            <person name="Somerville C.R."/>
            <person name="Copenhaver G.P."/>
            <person name="Preuss D."/>
            <person name="Nierman W.C."/>
            <person name="White O."/>
            <person name="Eisen J.A."/>
            <person name="Salzberg S.L."/>
            <person name="Fraser C.M."/>
            <person name="Venter J.C."/>
        </authorList>
    </citation>
    <scope>NUCLEOTIDE SEQUENCE [LARGE SCALE GENOMIC DNA]</scope>
    <source>
        <strain>cv. Columbia</strain>
    </source>
</reference>
<reference key="2">
    <citation type="journal article" date="2017" name="Plant J.">
        <title>Araport11: a complete reannotation of the Arabidopsis thaliana reference genome.</title>
        <authorList>
            <person name="Cheng C.Y."/>
            <person name="Krishnakumar V."/>
            <person name="Chan A.P."/>
            <person name="Thibaud-Nissen F."/>
            <person name="Schobel S."/>
            <person name="Town C.D."/>
        </authorList>
    </citation>
    <scope>GENOME REANNOTATION</scope>
    <source>
        <strain>cv. Columbia</strain>
    </source>
</reference>
<reference key="3">
    <citation type="journal article" date="2002" name="Science">
        <title>Functional annotation of a full-length Arabidopsis cDNA collection.</title>
        <authorList>
            <person name="Seki M."/>
            <person name="Narusaka M."/>
            <person name="Kamiya A."/>
            <person name="Ishida J."/>
            <person name="Satou M."/>
            <person name="Sakurai T."/>
            <person name="Nakajima M."/>
            <person name="Enju A."/>
            <person name="Akiyama K."/>
            <person name="Oono Y."/>
            <person name="Muramatsu M."/>
            <person name="Hayashizaki Y."/>
            <person name="Kawai J."/>
            <person name="Carninci P."/>
            <person name="Itoh M."/>
            <person name="Ishii Y."/>
            <person name="Arakawa T."/>
            <person name="Shibata K."/>
            <person name="Shinagawa A."/>
            <person name="Shinozaki K."/>
        </authorList>
    </citation>
    <scope>NUCLEOTIDE SEQUENCE [LARGE SCALE MRNA]</scope>
    <source>
        <strain>cv. Columbia</strain>
    </source>
</reference>
<protein>
    <recommendedName>
        <fullName>Cytochrome P450 76C3</fullName>
        <ecNumber>1.14.-.-</ecNumber>
    </recommendedName>
</protein>
<name>C76C3_ARATH</name>
<evidence type="ECO:0000250" key="1"/>
<evidence type="ECO:0000255" key="2"/>
<evidence type="ECO:0000305" key="3"/>
<keyword id="KW-0349">Heme</keyword>
<keyword id="KW-0408">Iron</keyword>
<keyword id="KW-0472">Membrane</keyword>
<keyword id="KW-0479">Metal-binding</keyword>
<keyword id="KW-0503">Monooxygenase</keyword>
<keyword id="KW-0560">Oxidoreductase</keyword>
<keyword id="KW-1185">Reference proteome</keyword>
<keyword id="KW-0812">Transmembrane</keyword>
<keyword id="KW-1133">Transmembrane helix</keyword>
<organism>
    <name type="scientific">Arabidopsis thaliana</name>
    <name type="common">Mouse-ear cress</name>
    <dbReference type="NCBI Taxonomy" id="3702"/>
    <lineage>
        <taxon>Eukaryota</taxon>
        <taxon>Viridiplantae</taxon>
        <taxon>Streptophyta</taxon>
        <taxon>Embryophyta</taxon>
        <taxon>Tracheophyta</taxon>
        <taxon>Spermatophyta</taxon>
        <taxon>Magnoliopsida</taxon>
        <taxon>eudicotyledons</taxon>
        <taxon>Gunneridae</taxon>
        <taxon>Pentapetalae</taxon>
        <taxon>rosids</taxon>
        <taxon>malvids</taxon>
        <taxon>Brassicales</taxon>
        <taxon>Brassicaceae</taxon>
        <taxon>Camelineae</taxon>
        <taxon>Arabidopsis</taxon>
    </lineage>
</organism>
<comment type="cofactor">
    <cofactor evidence="1">
        <name>heme</name>
        <dbReference type="ChEBI" id="CHEBI:30413"/>
    </cofactor>
</comment>
<comment type="subcellular location">
    <subcellularLocation>
        <location evidence="3">Membrane</location>
        <topology evidence="3">Single-pass membrane protein</topology>
    </subcellularLocation>
</comment>
<comment type="similarity">
    <text evidence="3">Belongs to the cytochrome P450 family.</text>
</comment>
<comment type="sequence caution" evidence="3">
    <conflict type="erroneous initiation">
        <sequence resource="EMBL-CDS" id="AAC06159"/>
    </conflict>
</comment>
<sequence length="515" mass="58143">MDLSLIQGMSLPLYFLLTLFFFFFATAKTRRSSSTGTLPPGPPILPLVGNIFQLGFNPHRSLAAFSKTYGPIMSLKLGRLTAVVISSPEAAKEALRTHDHVMSARTFNDALRAFDHHKHSIVWIPPSARWRFLKKTITKYLLSPQNLDAIQSLRMRKVEELVSLVNEFRERGEAIDLARASFVTSFNIISNALFSVDLATYDSNSSSYEFHNTVVHLTDIAGIPNVGDYFQYMRFLDLQGTRKKAVLCIEKLFRVFQEFIDARLAKRFSRTEKEPKEASSIDMLDSLLDLTQQNEAELTMNDLKHLLLDVFVAGTDTNSSTMEWAMTELFRSTEKMVKAQSEIRQVIGQNGFVQESDIPSLPYLQAIVKETLRLHPAAPLIPRKSESDVQIMGFLVPKNTQVVVNVWAIGRDASVWENPMKFEPERFLLRETDVKGRDFELIPFGSGRRMCPGISMALKTMHMVLASLLYSFDWKLQNGVVPGNIDMSETFGLTLHKAKSLCAVPVKKPTISSSY</sequence>
<gene>
    <name type="primary">CYP76C3</name>
    <name type="ordered locus">At2g45580</name>
    <name type="ORF">F17K2.11</name>
</gene>
<feature type="chain" id="PRO_0000052143" description="Cytochrome P450 76C3">
    <location>
        <begin position="1"/>
        <end position="515"/>
    </location>
</feature>
<feature type="transmembrane region" description="Helical" evidence="2">
    <location>
        <begin position="5"/>
        <end position="25"/>
    </location>
</feature>
<feature type="binding site" description="axial binding residue" evidence="1">
    <location>
        <position position="451"/>
    </location>
    <ligand>
        <name>heme</name>
        <dbReference type="ChEBI" id="CHEBI:30413"/>
    </ligand>
    <ligandPart>
        <name>Fe</name>
        <dbReference type="ChEBI" id="CHEBI:18248"/>
    </ligandPart>
</feature>
<feature type="sequence conflict" description="In Ref. 3; BAC42787." evidence="3" ref="3">
    <original>D</original>
    <variation>A</variation>
    <location>
        <position position="438"/>
    </location>
</feature>